<proteinExistence type="inferred from homology"/>
<gene>
    <name evidence="1" type="primary">murQ</name>
    <name type="ordered locus">Pmob_0485</name>
</gene>
<organism>
    <name type="scientific">Petrotoga mobilis (strain DSM 10674 / SJ95)</name>
    <dbReference type="NCBI Taxonomy" id="403833"/>
    <lineage>
        <taxon>Bacteria</taxon>
        <taxon>Thermotogati</taxon>
        <taxon>Thermotogota</taxon>
        <taxon>Thermotogae</taxon>
        <taxon>Petrotogales</taxon>
        <taxon>Petrotogaceae</taxon>
        <taxon>Petrotoga</taxon>
    </lineage>
</organism>
<protein>
    <recommendedName>
        <fullName evidence="1">N-acetylmuramic acid 6-phosphate etherase</fullName>
        <shortName evidence="1">MurNAc-6-P etherase</shortName>
        <ecNumber evidence="1">4.2.1.126</ecNumber>
    </recommendedName>
    <alternativeName>
        <fullName evidence="1">N-acetylmuramic acid 6-phosphate hydrolase</fullName>
    </alternativeName>
    <alternativeName>
        <fullName evidence="1">N-acetylmuramic acid 6-phosphate lyase</fullName>
    </alternativeName>
</protein>
<name>MURQ_PETMO</name>
<comment type="function">
    <text evidence="1">Specifically catalyzes the cleavage of the D-lactyl ether substituent of MurNAc 6-phosphate, producing GlcNAc 6-phosphate and D-lactate.</text>
</comment>
<comment type="catalytic activity">
    <reaction evidence="1">
        <text>N-acetyl-D-muramate 6-phosphate + H2O = N-acetyl-D-glucosamine 6-phosphate + (R)-lactate</text>
        <dbReference type="Rhea" id="RHEA:26410"/>
        <dbReference type="ChEBI" id="CHEBI:15377"/>
        <dbReference type="ChEBI" id="CHEBI:16004"/>
        <dbReference type="ChEBI" id="CHEBI:57513"/>
        <dbReference type="ChEBI" id="CHEBI:58722"/>
        <dbReference type="EC" id="4.2.1.126"/>
    </reaction>
</comment>
<comment type="pathway">
    <text evidence="1">Amino-sugar metabolism; N-acetylmuramate degradation.</text>
</comment>
<comment type="subunit">
    <text evidence="1">Homodimer.</text>
</comment>
<comment type="miscellaneous">
    <text evidence="1">A lyase-type mechanism (elimination/hydration) is suggested for the cleavage of the lactyl ether bond of MurNAc 6-phosphate, with the formation of an alpha,beta-unsaturated aldehyde intermediate with (E)-stereochemistry, followed by the syn addition of water to give product.</text>
</comment>
<comment type="similarity">
    <text evidence="1">Belongs to the GCKR-like family. MurNAc-6-P etherase subfamily.</text>
</comment>
<sequence length="298" mass="32850">MLENLETEKSNPKTQNLDEMDIHEILRIINQEDATIALSIAENLENIENVVANCISAIKNHGRIIYVGAGTSGRVAVVDAVETVPTFGIDSGIFLPLIAGGEKAFFQATEHVEDYEESGKKDLEKNNVRSEDYVIGITASGRTPYVKGALSLAKEIGCKTALICNVKNPELMEFSDIVVSLRTGPEVIAGSTRMKAGTAQKMVLNMISTVTMIKLGKTFKNYMVDVKIMNQKLEERAVRIISEVTGLDKKTCKEYLIKADMKPKLAILMILSGKDKEFCIEALKKNEVLHEALKTLKN</sequence>
<feature type="chain" id="PRO_1000075111" description="N-acetylmuramic acid 6-phosphate etherase">
    <location>
        <begin position="1"/>
        <end position="298"/>
    </location>
</feature>
<feature type="domain" description="SIS" evidence="1">
    <location>
        <begin position="54"/>
        <end position="217"/>
    </location>
</feature>
<feature type="active site" description="Proton donor" evidence="1">
    <location>
        <position position="82"/>
    </location>
</feature>
<feature type="active site" evidence="1">
    <location>
        <position position="113"/>
    </location>
</feature>
<accession>A9BFQ1</accession>
<dbReference type="EC" id="4.2.1.126" evidence="1"/>
<dbReference type="EMBL" id="CP000879">
    <property type="protein sequence ID" value="ABX31221.1"/>
    <property type="molecule type" value="Genomic_DNA"/>
</dbReference>
<dbReference type="RefSeq" id="WP_012208325.1">
    <property type="nucleotide sequence ID" value="NC_010003.1"/>
</dbReference>
<dbReference type="SMR" id="A9BFQ1"/>
<dbReference type="STRING" id="403833.Pmob_0485"/>
<dbReference type="KEGG" id="pmo:Pmob_0485"/>
<dbReference type="eggNOG" id="COG2103">
    <property type="taxonomic scope" value="Bacteria"/>
</dbReference>
<dbReference type="HOGENOM" id="CLU_049049_1_1_0"/>
<dbReference type="OrthoDB" id="9813395at2"/>
<dbReference type="UniPathway" id="UPA00342"/>
<dbReference type="Proteomes" id="UP000000789">
    <property type="component" value="Chromosome"/>
</dbReference>
<dbReference type="GO" id="GO:0097367">
    <property type="term" value="F:carbohydrate derivative binding"/>
    <property type="evidence" value="ECO:0007669"/>
    <property type="project" value="InterPro"/>
</dbReference>
<dbReference type="GO" id="GO:0016835">
    <property type="term" value="F:carbon-oxygen lyase activity"/>
    <property type="evidence" value="ECO:0007669"/>
    <property type="project" value="UniProtKB-UniRule"/>
</dbReference>
<dbReference type="GO" id="GO:0016803">
    <property type="term" value="F:ether hydrolase activity"/>
    <property type="evidence" value="ECO:0007669"/>
    <property type="project" value="TreeGrafter"/>
</dbReference>
<dbReference type="GO" id="GO:0046348">
    <property type="term" value="P:amino sugar catabolic process"/>
    <property type="evidence" value="ECO:0007669"/>
    <property type="project" value="InterPro"/>
</dbReference>
<dbReference type="GO" id="GO:0097173">
    <property type="term" value="P:N-acetylmuramic acid catabolic process"/>
    <property type="evidence" value="ECO:0007669"/>
    <property type="project" value="UniProtKB-UniPathway"/>
</dbReference>
<dbReference type="GO" id="GO:0009254">
    <property type="term" value="P:peptidoglycan turnover"/>
    <property type="evidence" value="ECO:0007669"/>
    <property type="project" value="TreeGrafter"/>
</dbReference>
<dbReference type="CDD" id="cd05007">
    <property type="entry name" value="SIS_Etherase"/>
    <property type="match status" value="1"/>
</dbReference>
<dbReference type="FunFam" id="3.40.50.10490:FF:000014">
    <property type="entry name" value="N-acetylmuramic acid 6-phosphate etherase"/>
    <property type="match status" value="1"/>
</dbReference>
<dbReference type="Gene3D" id="1.10.8.1080">
    <property type="match status" value="1"/>
</dbReference>
<dbReference type="Gene3D" id="3.40.50.10490">
    <property type="entry name" value="Glucose-6-phosphate isomerase like protein, domain 1"/>
    <property type="match status" value="1"/>
</dbReference>
<dbReference type="HAMAP" id="MF_00068">
    <property type="entry name" value="MurQ"/>
    <property type="match status" value="1"/>
</dbReference>
<dbReference type="InterPro" id="IPR005488">
    <property type="entry name" value="Etherase_MurQ"/>
</dbReference>
<dbReference type="InterPro" id="IPR005486">
    <property type="entry name" value="Glucokinase_regulatory_CS"/>
</dbReference>
<dbReference type="InterPro" id="IPR040190">
    <property type="entry name" value="MURQ/GCKR"/>
</dbReference>
<dbReference type="InterPro" id="IPR001347">
    <property type="entry name" value="SIS_dom"/>
</dbReference>
<dbReference type="InterPro" id="IPR046348">
    <property type="entry name" value="SIS_dom_sf"/>
</dbReference>
<dbReference type="NCBIfam" id="TIGR00274">
    <property type="entry name" value="N-acetylmuramic acid 6-phosphate etherase"/>
    <property type="match status" value="1"/>
</dbReference>
<dbReference type="NCBIfam" id="NF003915">
    <property type="entry name" value="PRK05441.1"/>
    <property type="match status" value="1"/>
</dbReference>
<dbReference type="NCBIfam" id="NF009222">
    <property type="entry name" value="PRK12570.1"/>
    <property type="match status" value="1"/>
</dbReference>
<dbReference type="PANTHER" id="PTHR10088">
    <property type="entry name" value="GLUCOKINASE REGULATORY PROTEIN"/>
    <property type="match status" value="1"/>
</dbReference>
<dbReference type="PANTHER" id="PTHR10088:SF4">
    <property type="entry name" value="GLUCOKINASE REGULATORY PROTEIN"/>
    <property type="match status" value="1"/>
</dbReference>
<dbReference type="Pfam" id="PF20741">
    <property type="entry name" value="GKRP-like_C"/>
    <property type="match status" value="1"/>
</dbReference>
<dbReference type="Pfam" id="PF22645">
    <property type="entry name" value="GKRP_SIS_N"/>
    <property type="match status" value="1"/>
</dbReference>
<dbReference type="SUPFAM" id="SSF53697">
    <property type="entry name" value="SIS domain"/>
    <property type="match status" value="1"/>
</dbReference>
<dbReference type="PROSITE" id="PS01272">
    <property type="entry name" value="GCKR"/>
    <property type="match status" value="1"/>
</dbReference>
<dbReference type="PROSITE" id="PS51464">
    <property type="entry name" value="SIS"/>
    <property type="match status" value="1"/>
</dbReference>
<keyword id="KW-0119">Carbohydrate metabolism</keyword>
<keyword id="KW-0456">Lyase</keyword>
<reference key="1">
    <citation type="submission" date="2007-11" db="EMBL/GenBank/DDBJ databases">
        <title>Complete sequence of Petroga mobilis SJ95.</title>
        <authorList>
            <consortium name="US DOE Joint Genome Institute"/>
            <person name="Copeland A."/>
            <person name="Lucas S."/>
            <person name="Lapidus A."/>
            <person name="Barry K."/>
            <person name="Glavina del Rio T."/>
            <person name="Dalin E."/>
            <person name="Tice H."/>
            <person name="Pitluck S."/>
            <person name="Meincke L."/>
            <person name="Brettin T."/>
            <person name="Bruce D."/>
            <person name="Detter J.C."/>
            <person name="Han C."/>
            <person name="Kuske C.R."/>
            <person name="Schmutz J."/>
            <person name="Larimer F."/>
            <person name="Land M."/>
            <person name="Hauser L."/>
            <person name="Kyrpides N."/>
            <person name="Mikhailova N."/>
            <person name="Noll K."/>
            <person name="Richardson P."/>
        </authorList>
    </citation>
    <scope>NUCLEOTIDE SEQUENCE [LARGE SCALE GENOMIC DNA]</scope>
    <source>
        <strain>DSM 10674 / SJ95</strain>
    </source>
</reference>
<evidence type="ECO:0000255" key="1">
    <source>
        <dbReference type="HAMAP-Rule" id="MF_00068"/>
    </source>
</evidence>